<protein>
    <recommendedName>
        <fullName>2'-N-acetylparomamine deacetylase</fullName>
        <ecNumber>3.5.1.112</ecNumber>
    </recommendedName>
    <alternativeName>
        <fullName>2'''-acetyl-6'''-hydroxyneomycin C deacetylase</fullName>
        <ecNumber>3.5.1.113</ecNumber>
    </alternativeName>
    <alternativeName>
        <fullName>Neomycin biosynthesis protein 16</fullName>
        <shortName>Neo-16</shortName>
    </alternativeName>
    <alternativeName>
        <fullName>Neomycin biosynthesis protein L</fullName>
    </alternativeName>
</protein>
<feature type="chain" id="PRO_0000421745" description="2'-N-acetylparomamine deacetylase">
    <location>
        <begin position="1"/>
        <end position="279"/>
    </location>
</feature>
<feature type="region of interest" description="Disordered" evidence="2">
    <location>
        <begin position="245"/>
        <end position="279"/>
    </location>
</feature>
<feature type="compositionally biased region" description="Low complexity" evidence="2">
    <location>
        <begin position="246"/>
        <end position="258"/>
    </location>
</feature>
<feature type="binding site" evidence="1">
    <location>
        <position position="31"/>
    </location>
    <ligand>
        <name>Zn(2+)</name>
        <dbReference type="ChEBI" id="CHEBI:29105"/>
    </ligand>
</feature>
<feature type="binding site" evidence="1">
    <location>
        <position position="34"/>
    </location>
    <ligand>
        <name>Zn(2+)</name>
        <dbReference type="ChEBI" id="CHEBI:29105"/>
    </ligand>
</feature>
<feature type="binding site" evidence="1">
    <location>
        <position position="157"/>
    </location>
    <ligand>
        <name>Zn(2+)</name>
        <dbReference type="ChEBI" id="CHEBI:29105"/>
    </ligand>
</feature>
<reference key="1">
    <citation type="journal article" date="2005" name="J. Antibiot.">
        <title>Biosynthesis of 2-deoxystreptamine by three crucial enzymes in Streptomyces fradiae NBRC 12773.</title>
        <authorList>
            <person name="Kudo F."/>
            <person name="Yamamoto Y."/>
            <person name="Yokoyama K."/>
            <person name="Eguchi T."/>
            <person name="Kakinuma K."/>
        </authorList>
    </citation>
    <scope>NUCLEOTIDE SEQUENCE [GENOMIC DNA]</scope>
    <source>
        <strain>ATCC 10745 / CBS 498.68 / DSM 40063 / JCM 4133 / NBRC 12773 / NCIMB 8233 / NRRL B-1195 / VKM Ac-150</strain>
    </source>
</reference>
<reference key="2">
    <citation type="journal article" date="2005" name="Org. Biomol. Chem.">
        <title>The neomycin biosynthetic gene cluster of Streptomyces fradiae NCIMB 8233: characterisation of an aminotransferase involved in the formation of 2-deoxystreptamine.</title>
        <authorList>
            <person name="Huang F."/>
            <person name="Haydock S.F."/>
            <person name="Mironenko T."/>
            <person name="Spiteller D."/>
            <person name="Li Y."/>
            <person name="Spencer J.B."/>
        </authorList>
    </citation>
    <scope>NUCLEOTIDE SEQUENCE [GENOMIC DNA]</scope>
    <source>
        <strain>ATCC 10745 / CBS 498.68 / DSM 40063 / JCM 4133 / NBRC 12773 / NCIMB 8233 / NRRL B-1195 / VKM Ac-150</strain>
    </source>
</reference>
<reference key="3">
    <citation type="submission" date="2004-02" db="EMBL/GenBank/DDBJ databases">
        <title>Analysis and comparison of biosynthetic gene clusters for the 2-deoxy-inosamine containing aminoglycoside antibiotics ribostamycin, neomycin, lividomycin, paromomycin and butirosin.</title>
        <authorList>
            <person name="Aboshanab K.M."/>
            <person name="Schmidt-Beissner H."/>
            <person name="Wehmeier U.F."/>
            <person name="Piepersberg W."/>
            <person name="Welzel K."/>
            <person name="Vente A."/>
        </authorList>
    </citation>
    <scope>NUCLEOTIDE SEQUENCE [GENOMIC DNA]</scope>
    <source>
        <strain>ATCC 10745 / CBS 498.68 / DSM 40063 / JCM 4133 / NBRC 12773 / NCIMB 8233 / NRRL B-1195 / VKM Ac-150</strain>
    </source>
</reference>
<reference key="4">
    <citation type="submission" date="2004-07" db="EMBL/GenBank/DDBJ databases">
        <title>Cloning and characterization of a neomycin biosynthetic gene cluster from Streptomyces fradiae, ATCC 10745.</title>
        <authorList>
            <person name="Subba B."/>
            <person name="Kharel M.K."/>
            <person name="Sthapit B."/>
            <person name="Liou K."/>
            <person name="Lee H.C."/>
            <person name="Woo J.S."/>
            <person name="Sohng J.K."/>
        </authorList>
    </citation>
    <scope>NUCLEOTIDE SEQUENCE [GENOMIC DNA]</scope>
    <source>
        <strain>ATCC 10745 / CBS 498.68 / DSM 40063 / JCM 4133 / NBRC 12773 / NCIMB 8233 / NRRL B-1195 / VKM Ac-150</strain>
    </source>
</reference>
<reference key="5">
    <citation type="journal article" date="2008" name="ChemBioChem">
        <title>Involvement of two distinct N-acetylglucosaminyltransferases and a dual-function deacetylase in neomycin biosynthesis.</title>
        <authorList>
            <person name="Yokoyama K."/>
            <person name="Yamamoto Y."/>
            <person name="Kudo F."/>
            <person name="Eguchi T."/>
        </authorList>
    </citation>
    <scope>FUNCTION</scope>
    <scope>CATALYTIC ACTIVITY</scope>
    <scope>PATHWAY</scope>
</reference>
<accession>Q53U10</accession>
<accession>Q4A4C8</accession>
<organism>
    <name type="scientific">Streptomyces fradiae</name>
    <name type="common">Streptomyces roseoflavus</name>
    <dbReference type="NCBI Taxonomy" id="1906"/>
    <lineage>
        <taxon>Bacteria</taxon>
        <taxon>Bacillati</taxon>
        <taxon>Actinomycetota</taxon>
        <taxon>Actinomycetes</taxon>
        <taxon>Kitasatosporales</taxon>
        <taxon>Streptomycetaceae</taxon>
        <taxon>Streptomyces</taxon>
    </lineage>
</organism>
<sequence length="279" mass="30109">MGEPTWEAAEDPDRTLRERLRRGRTLLVSPHPDDVAYSCGGLLAAVGRPAHATLLTVFTRSAWALPRRLRRAGARVVSERRREEELRYCRLRGLAEYRPLGFADAGLRGYDDETELSSPAEADGVRGAVEEAVAEAIRDAGADTVLAPAAVGGHVDHLLVHGAVRGAVGPGGPLTLFYEDLPYAGQRDAVDVERTLREARGLVPFASVDISGVVQQKVRGMYVYGSQTDDECVRETLRHARRGAPRRWTGGTAGAGHAAGRRGAPHTERVWTPAPAGAR</sequence>
<proteinExistence type="evidence at protein level"/>
<comment type="function">
    <text evidence="3">Deacetylase involved in the biosynthesis of neomycin by mediating 2 steps of the pathway. Deacetylates both 2'-N-acetylparomamine and 2'''-acetyl-6'''-hydroxyneomycin C.</text>
</comment>
<comment type="catalytic activity">
    <reaction evidence="3">
        <text>2'-N-acetylparomamine + H2O = paromamine + acetate</text>
        <dbReference type="Rhea" id="RHEA:34031"/>
        <dbReference type="ChEBI" id="CHEBI:15377"/>
        <dbReference type="ChEBI" id="CHEBI:30089"/>
        <dbReference type="ChEBI" id="CHEBI:65010"/>
        <dbReference type="ChEBI" id="CHEBI:65015"/>
        <dbReference type="EC" id="3.5.1.112"/>
    </reaction>
</comment>
<comment type="catalytic activity">
    <reaction evidence="3">
        <text>2'''-acetyl-6'''-hydroxyneomycin C + H2O = 6'''-deamino-6'''-hydroxyneomycin C + acetate</text>
        <dbReference type="Rhea" id="RHEA:34051"/>
        <dbReference type="ChEBI" id="CHEBI:15377"/>
        <dbReference type="ChEBI" id="CHEBI:30089"/>
        <dbReference type="ChEBI" id="CHEBI:65030"/>
        <dbReference type="ChEBI" id="CHEBI:65031"/>
        <dbReference type="EC" id="3.5.1.113"/>
    </reaction>
</comment>
<comment type="cofactor">
    <cofactor evidence="1">
        <name>Zn(2+)</name>
        <dbReference type="ChEBI" id="CHEBI:29105"/>
    </cofactor>
    <text evidence="1">Binds 1 zinc ion per subunit.</text>
</comment>
<comment type="pathway">
    <text evidence="3">Antibiotic biosynthesis; neomycin biosynthesis.</text>
</comment>
<comment type="similarity">
    <text evidence="4">Belongs to the PIGL family.</text>
</comment>
<comment type="sequence caution" evidence="4">
    <conflict type="erroneous initiation">
        <sequence resource="EMBL-CDS" id="CAH05093"/>
    </conflict>
    <text>Truncated N-terminus.</text>
</comment>
<evidence type="ECO:0000250" key="1"/>
<evidence type="ECO:0000256" key="2">
    <source>
        <dbReference type="SAM" id="MobiDB-lite"/>
    </source>
</evidence>
<evidence type="ECO:0000269" key="3">
    <source>
    </source>
</evidence>
<evidence type="ECO:0000305" key="4"/>
<keyword id="KW-0045">Antibiotic biosynthesis</keyword>
<keyword id="KW-0378">Hydrolase</keyword>
<keyword id="KW-0479">Metal-binding</keyword>
<keyword id="KW-0808">Transferase</keyword>
<keyword id="KW-0862">Zinc</keyword>
<dbReference type="EC" id="3.5.1.112"/>
<dbReference type="EC" id="3.5.1.113"/>
<dbReference type="EMBL" id="AB211959">
    <property type="protein sequence ID" value="BAD95829.1"/>
    <property type="molecule type" value="Genomic_DNA"/>
</dbReference>
<dbReference type="EMBL" id="AJ843080">
    <property type="protein sequence ID" value="CAH58699.1"/>
    <property type="molecule type" value="Genomic_DNA"/>
</dbReference>
<dbReference type="EMBL" id="AJ629247">
    <property type="protein sequence ID" value="CAF33321.1"/>
    <property type="molecule type" value="Genomic_DNA"/>
</dbReference>
<dbReference type="EMBL" id="AJ786317">
    <property type="protein sequence ID" value="CAH05093.1"/>
    <property type="status" value="ALT_INIT"/>
    <property type="molecule type" value="Genomic_DNA"/>
</dbReference>
<dbReference type="RefSeq" id="WP_051839528.1">
    <property type="nucleotide sequence ID" value="NZ_JBIVWQ010000007.1"/>
</dbReference>
<dbReference type="SMR" id="Q53U10"/>
<dbReference type="KEGG" id="ag:BAD95829"/>
<dbReference type="BioCyc" id="MetaCyc:MONOMER-17259"/>
<dbReference type="UniPathway" id="UPA00969"/>
<dbReference type="GO" id="GO:0016811">
    <property type="term" value="F:hydrolase activity, acting on carbon-nitrogen (but not peptide) bonds, in linear amides"/>
    <property type="evidence" value="ECO:0000314"/>
    <property type="project" value="UniProtKB"/>
</dbReference>
<dbReference type="GO" id="GO:0046872">
    <property type="term" value="F:metal ion binding"/>
    <property type="evidence" value="ECO:0007669"/>
    <property type="project" value="UniProtKB-KW"/>
</dbReference>
<dbReference type="GO" id="GO:0016740">
    <property type="term" value="F:transferase activity"/>
    <property type="evidence" value="ECO:0007669"/>
    <property type="project" value="UniProtKB-KW"/>
</dbReference>
<dbReference type="GO" id="GO:1901158">
    <property type="term" value="P:neomycin biosynthetic process"/>
    <property type="evidence" value="ECO:0000314"/>
    <property type="project" value="UniProtKB"/>
</dbReference>
<dbReference type="Gene3D" id="3.40.50.10320">
    <property type="entry name" value="LmbE-like"/>
    <property type="match status" value="1"/>
</dbReference>
<dbReference type="InterPro" id="IPR003737">
    <property type="entry name" value="GlcNAc_PI_deacetylase-related"/>
</dbReference>
<dbReference type="InterPro" id="IPR024078">
    <property type="entry name" value="LmbE-like_dom_sf"/>
</dbReference>
<dbReference type="Pfam" id="PF02585">
    <property type="entry name" value="PIG-L"/>
    <property type="match status" value="1"/>
</dbReference>
<dbReference type="SUPFAM" id="SSF102588">
    <property type="entry name" value="LmbE-like"/>
    <property type="match status" value="1"/>
</dbReference>
<name>NEOL_STRFR</name>
<gene>
    <name type="primary">neoL</name>
    <name type="synonym">neo16</name>
    <name type="synonym">neoD</name>
</gene>